<accession>Q8NHS4</accession>
<accession>B2RDV1</accession>
<accession>Q53R93</accession>
<accession>Q8N403</accession>
<evidence type="ECO:0000255" key="1"/>
<evidence type="ECO:0000269" key="2">
    <source>
    </source>
</evidence>
<evidence type="ECO:0000269" key="3">
    <source>
    </source>
</evidence>
<evidence type="ECO:0000303" key="4">
    <source>
    </source>
</evidence>
<feature type="chain" id="PRO_0000325870" description="Clathrin heavy chain linker domain-containing protein 1">
    <location>
        <begin position="1"/>
        <end position="586"/>
    </location>
</feature>
<feature type="coiled-coil region" evidence="1">
    <location>
        <begin position="174"/>
        <end position="232"/>
    </location>
</feature>
<feature type="splice variant" id="VSP_032461" description="In isoform 2." evidence="4">
    <location>
        <begin position="1"/>
        <end position="122"/>
    </location>
</feature>
<feature type="sequence variant" id="VAR_039944" description="In dbSNP:rs9677948." evidence="2 3">
    <original>A</original>
    <variation>V</variation>
    <location>
        <position position="178"/>
    </location>
</feature>
<feature type="sequence variant" id="VAR_039945" description="In dbSNP:rs6716066." evidence="2 3">
    <original>V</original>
    <variation>I</variation>
    <location>
        <position position="426"/>
    </location>
</feature>
<feature type="sequence variant" id="VAR_039946" description="In dbSNP:rs14026." evidence="3">
    <original>A</original>
    <variation>V</variation>
    <location>
        <position position="503"/>
    </location>
</feature>
<feature type="sequence variant" id="VAR_039947" description="In dbSNP:rs3186099.">
    <original>D</original>
    <variation>Y</variation>
    <location>
        <position position="552"/>
    </location>
</feature>
<reference key="1">
    <citation type="journal article" date="2004" name="Nat. Genet.">
        <title>Complete sequencing and characterization of 21,243 full-length human cDNAs.</title>
        <authorList>
            <person name="Ota T."/>
            <person name="Suzuki Y."/>
            <person name="Nishikawa T."/>
            <person name="Otsuki T."/>
            <person name="Sugiyama T."/>
            <person name="Irie R."/>
            <person name="Wakamatsu A."/>
            <person name="Hayashi K."/>
            <person name="Sato H."/>
            <person name="Nagai K."/>
            <person name="Kimura K."/>
            <person name="Makita H."/>
            <person name="Sekine M."/>
            <person name="Obayashi M."/>
            <person name="Nishi T."/>
            <person name="Shibahara T."/>
            <person name="Tanaka T."/>
            <person name="Ishii S."/>
            <person name="Yamamoto J."/>
            <person name="Saito K."/>
            <person name="Kawai Y."/>
            <person name="Isono Y."/>
            <person name="Nakamura Y."/>
            <person name="Nagahari K."/>
            <person name="Murakami K."/>
            <person name="Yasuda T."/>
            <person name="Iwayanagi T."/>
            <person name="Wagatsuma M."/>
            <person name="Shiratori A."/>
            <person name="Sudo H."/>
            <person name="Hosoiri T."/>
            <person name="Kaku Y."/>
            <person name="Kodaira H."/>
            <person name="Kondo H."/>
            <person name="Sugawara M."/>
            <person name="Takahashi M."/>
            <person name="Kanda K."/>
            <person name="Yokoi T."/>
            <person name="Furuya T."/>
            <person name="Kikkawa E."/>
            <person name="Omura Y."/>
            <person name="Abe K."/>
            <person name="Kamihara K."/>
            <person name="Katsuta N."/>
            <person name="Sato K."/>
            <person name="Tanikawa M."/>
            <person name="Yamazaki M."/>
            <person name="Ninomiya K."/>
            <person name="Ishibashi T."/>
            <person name="Yamashita H."/>
            <person name="Murakawa K."/>
            <person name="Fujimori K."/>
            <person name="Tanai H."/>
            <person name="Kimata M."/>
            <person name="Watanabe M."/>
            <person name="Hiraoka S."/>
            <person name="Chiba Y."/>
            <person name="Ishida S."/>
            <person name="Ono Y."/>
            <person name="Takiguchi S."/>
            <person name="Watanabe S."/>
            <person name="Yosida M."/>
            <person name="Hotuta T."/>
            <person name="Kusano J."/>
            <person name="Kanehori K."/>
            <person name="Takahashi-Fujii A."/>
            <person name="Hara H."/>
            <person name="Tanase T.-O."/>
            <person name="Nomura Y."/>
            <person name="Togiya S."/>
            <person name="Komai F."/>
            <person name="Hara R."/>
            <person name="Takeuchi K."/>
            <person name="Arita M."/>
            <person name="Imose N."/>
            <person name="Musashino K."/>
            <person name="Yuuki H."/>
            <person name="Oshima A."/>
            <person name="Sasaki N."/>
            <person name="Aotsuka S."/>
            <person name="Yoshikawa Y."/>
            <person name="Matsunawa H."/>
            <person name="Ichihara T."/>
            <person name="Shiohata N."/>
            <person name="Sano S."/>
            <person name="Moriya S."/>
            <person name="Momiyama H."/>
            <person name="Satoh N."/>
            <person name="Takami S."/>
            <person name="Terashima Y."/>
            <person name="Suzuki O."/>
            <person name="Nakagawa S."/>
            <person name="Senoh A."/>
            <person name="Mizoguchi H."/>
            <person name="Goto Y."/>
            <person name="Shimizu F."/>
            <person name="Wakebe H."/>
            <person name="Hishigaki H."/>
            <person name="Watanabe T."/>
            <person name="Sugiyama A."/>
            <person name="Takemoto M."/>
            <person name="Kawakami B."/>
            <person name="Yamazaki M."/>
            <person name="Watanabe K."/>
            <person name="Kumagai A."/>
            <person name="Itakura S."/>
            <person name="Fukuzumi Y."/>
            <person name="Fujimori Y."/>
            <person name="Komiyama M."/>
            <person name="Tashiro H."/>
            <person name="Tanigami A."/>
            <person name="Fujiwara T."/>
            <person name="Ono T."/>
            <person name="Yamada K."/>
            <person name="Fujii Y."/>
            <person name="Ozaki K."/>
            <person name="Hirao M."/>
            <person name="Ohmori Y."/>
            <person name="Kawabata A."/>
            <person name="Hikiji T."/>
            <person name="Kobatake N."/>
            <person name="Inagaki H."/>
            <person name="Ikema Y."/>
            <person name="Okamoto S."/>
            <person name="Okitani R."/>
            <person name="Kawakami T."/>
            <person name="Noguchi S."/>
            <person name="Itoh T."/>
            <person name="Shigeta K."/>
            <person name="Senba T."/>
            <person name="Matsumura K."/>
            <person name="Nakajima Y."/>
            <person name="Mizuno T."/>
            <person name="Morinaga M."/>
            <person name="Sasaki M."/>
            <person name="Togashi T."/>
            <person name="Oyama M."/>
            <person name="Hata H."/>
            <person name="Watanabe M."/>
            <person name="Komatsu T."/>
            <person name="Mizushima-Sugano J."/>
            <person name="Satoh T."/>
            <person name="Shirai Y."/>
            <person name="Takahashi Y."/>
            <person name="Nakagawa K."/>
            <person name="Okumura K."/>
            <person name="Nagase T."/>
            <person name="Nomura N."/>
            <person name="Kikuchi H."/>
            <person name="Masuho Y."/>
            <person name="Yamashita R."/>
            <person name="Nakai K."/>
            <person name="Yada T."/>
            <person name="Nakamura Y."/>
            <person name="Ohara O."/>
            <person name="Isogai T."/>
            <person name="Sugano S."/>
        </authorList>
    </citation>
    <scope>NUCLEOTIDE SEQUENCE [LARGE SCALE MRNA] (ISOFORM 1)</scope>
    <scope>VARIANTS VAL-178 AND ILE-426</scope>
    <source>
        <tissue>Testis</tissue>
    </source>
</reference>
<reference key="2">
    <citation type="journal article" date="2005" name="Nature">
        <title>Generation and annotation of the DNA sequences of human chromosomes 2 and 4.</title>
        <authorList>
            <person name="Hillier L.W."/>
            <person name="Graves T.A."/>
            <person name="Fulton R.S."/>
            <person name="Fulton L.A."/>
            <person name="Pepin K.H."/>
            <person name="Minx P."/>
            <person name="Wagner-McPherson C."/>
            <person name="Layman D."/>
            <person name="Wylie K."/>
            <person name="Sekhon M."/>
            <person name="Becker M.C."/>
            <person name="Fewell G.A."/>
            <person name="Delehaunty K.D."/>
            <person name="Miner T.L."/>
            <person name="Nash W.E."/>
            <person name="Kremitzki C."/>
            <person name="Oddy L."/>
            <person name="Du H."/>
            <person name="Sun H."/>
            <person name="Bradshaw-Cordum H."/>
            <person name="Ali J."/>
            <person name="Carter J."/>
            <person name="Cordes M."/>
            <person name="Harris A."/>
            <person name="Isak A."/>
            <person name="van Brunt A."/>
            <person name="Nguyen C."/>
            <person name="Du F."/>
            <person name="Courtney L."/>
            <person name="Kalicki J."/>
            <person name="Ozersky P."/>
            <person name="Abbott S."/>
            <person name="Armstrong J."/>
            <person name="Belter E.A."/>
            <person name="Caruso L."/>
            <person name="Cedroni M."/>
            <person name="Cotton M."/>
            <person name="Davidson T."/>
            <person name="Desai A."/>
            <person name="Elliott G."/>
            <person name="Erb T."/>
            <person name="Fronick C."/>
            <person name="Gaige T."/>
            <person name="Haakenson W."/>
            <person name="Haglund K."/>
            <person name="Holmes A."/>
            <person name="Harkins R."/>
            <person name="Kim K."/>
            <person name="Kruchowski S.S."/>
            <person name="Strong C.M."/>
            <person name="Grewal N."/>
            <person name="Goyea E."/>
            <person name="Hou S."/>
            <person name="Levy A."/>
            <person name="Martinka S."/>
            <person name="Mead K."/>
            <person name="McLellan M.D."/>
            <person name="Meyer R."/>
            <person name="Randall-Maher J."/>
            <person name="Tomlinson C."/>
            <person name="Dauphin-Kohlberg S."/>
            <person name="Kozlowicz-Reilly A."/>
            <person name="Shah N."/>
            <person name="Swearengen-Shahid S."/>
            <person name="Snider J."/>
            <person name="Strong J.T."/>
            <person name="Thompson J."/>
            <person name="Yoakum M."/>
            <person name="Leonard S."/>
            <person name="Pearman C."/>
            <person name="Trani L."/>
            <person name="Radionenko M."/>
            <person name="Waligorski J.E."/>
            <person name="Wang C."/>
            <person name="Rock S.M."/>
            <person name="Tin-Wollam A.-M."/>
            <person name="Maupin R."/>
            <person name="Latreille P."/>
            <person name="Wendl M.C."/>
            <person name="Yang S.-P."/>
            <person name="Pohl C."/>
            <person name="Wallis J.W."/>
            <person name="Spieth J."/>
            <person name="Bieri T.A."/>
            <person name="Berkowicz N."/>
            <person name="Nelson J.O."/>
            <person name="Osborne J."/>
            <person name="Ding L."/>
            <person name="Meyer R."/>
            <person name="Sabo A."/>
            <person name="Shotland Y."/>
            <person name="Sinha P."/>
            <person name="Wohldmann P.E."/>
            <person name="Cook L.L."/>
            <person name="Hickenbotham M.T."/>
            <person name="Eldred J."/>
            <person name="Williams D."/>
            <person name="Jones T.A."/>
            <person name="She X."/>
            <person name="Ciccarelli F.D."/>
            <person name="Izaurralde E."/>
            <person name="Taylor J."/>
            <person name="Schmutz J."/>
            <person name="Myers R.M."/>
            <person name="Cox D.R."/>
            <person name="Huang X."/>
            <person name="McPherson J.D."/>
            <person name="Mardis E.R."/>
            <person name="Clifton S.W."/>
            <person name="Warren W.C."/>
            <person name="Chinwalla A.T."/>
            <person name="Eddy S.R."/>
            <person name="Marra M.A."/>
            <person name="Ovcharenko I."/>
            <person name="Furey T.S."/>
            <person name="Miller W."/>
            <person name="Eichler E.E."/>
            <person name="Bork P."/>
            <person name="Suyama M."/>
            <person name="Torrents D."/>
            <person name="Waterston R.H."/>
            <person name="Wilson R.K."/>
        </authorList>
    </citation>
    <scope>NUCLEOTIDE SEQUENCE [LARGE SCALE GENOMIC DNA]</scope>
</reference>
<reference key="3">
    <citation type="journal article" date="2004" name="Genome Res.">
        <title>The status, quality, and expansion of the NIH full-length cDNA project: the Mammalian Gene Collection (MGC).</title>
        <authorList>
            <consortium name="The MGC Project Team"/>
        </authorList>
    </citation>
    <scope>NUCLEOTIDE SEQUENCE [LARGE SCALE MRNA] (ISOFORMS 1 AND 2)</scope>
    <scope>VARIANTS VAL-178; ILE-426 AND VAL-503</scope>
    <source>
        <tissue>Brain</tissue>
        <tissue>Testis</tissue>
    </source>
</reference>
<gene>
    <name type="primary">CLHC1</name>
    <name type="synonym">C2orf63</name>
</gene>
<sequence>MSVHQIRKHAVLPPIICRSDKEFLESVQRYIITETERLGCSEEGPADEYYIIYRNVFDKVIEHITAYKSILTSIKKEYDAFIETIKKDRRTTFCLHGKLKGLAAEPTALVYYRKRTIQLEAKMRIIESNSSKIQSQIDHIKQCRAEYDTKEVKYCTFSKDPSKPIPGMTLQESMNLDALTKYMKHLEDKYAEIKQAMLIKYVPAQRKADLDEEMIVLLKRRDVAENLNKKLQFCHQRLQIISQALSSWVKSDMSSPFQDFVEQIQKTKYLQGDQGIVEELMEDDPRRAKEAEIMLHYIERFNELISLGEYEKAACYAANSPRRILRNIGTMNTFKAVGKIRGKPLPLLLFFEALFITSHAFPCPVDAALTLEGIKCGLSEKRLDLVTNWVTQERLTFSEEAGDVICDYGEQDTYNKAKCLALAQIVYSECGLHKKAILCLCKQGQTHRVMEYIQQLKDFTTDDLLQLLMSCPQVELIQCLTKELNEKQPSLSFGLAILHLFSADMKKVGIKLLQEINKGGIDAVESLMINDSFCSIEKWQEVANICSQNGFDKLSNDITSILRSQAAVTEISEEDDAVNLMEHVFW</sequence>
<name>CLHC1_HUMAN</name>
<proteinExistence type="evidence at protein level"/>
<dbReference type="EMBL" id="AK315683">
    <property type="protein sequence ID" value="BAG38048.1"/>
    <property type="molecule type" value="mRNA"/>
</dbReference>
<dbReference type="EMBL" id="AC012358">
    <property type="status" value="NOT_ANNOTATED_CDS"/>
    <property type="molecule type" value="Genomic_DNA"/>
</dbReference>
<dbReference type="EMBL" id="AC093165">
    <property type="protein sequence ID" value="AAY24030.1"/>
    <property type="molecule type" value="Genomic_DNA"/>
</dbReference>
<dbReference type="EMBL" id="BC029502">
    <property type="protein sequence ID" value="AAH29502.1"/>
    <property type="molecule type" value="mRNA"/>
</dbReference>
<dbReference type="EMBL" id="BC036908">
    <property type="protein sequence ID" value="AAH36908.1"/>
    <property type="molecule type" value="mRNA"/>
</dbReference>
<dbReference type="CCDS" id="CCDS33201.1">
    <molecule id="Q8NHS4-1"/>
</dbReference>
<dbReference type="CCDS" id="CCDS46287.1">
    <molecule id="Q8NHS4-2"/>
</dbReference>
<dbReference type="RefSeq" id="NP_001129070.1">
    <molecule id="Q8NHS4-2"/>
    <property type="nucleotide sequence ID" value="NM_001135598.2"/>
</dbReference>
<dbReference type="RefSeq" id="NP_001340710.1">
    <molecule id="Q8NHS4-2"/>
    <property type="nucleotide sequence ID" value="NM_001353781.2"/>
</dbReference>
<dbReference type="RefSeq" id="NP_001340713.1">
    <molecule id="Q8NHS4-2"/>
    <property type="nucleotide sequence ID" value="NM_001353784.2"/>
</dbReference>
<dbReference type="RefSeq" id="NP_689598.2">
    <molecule id="Q8NHS4-1"/>
    <property type="nucleotide sequence ID" value="NM_152385.4"/>
</dbReference>
<dbReference type="RefSeq" id="XP_005264193.1">
    <property type="nucleotide sequence ID" value="XM_005264136.2"/>
</dbReference>
<dbReference type="RefSeq" id="XP_011530821.1">
    <property type="nucleotide sequence ID" value="XM_011532519.2"/>
</dbReference>
<dbReference type="RefSeq" id="XP_011530822.1">
    <property type="nucleotide sequence ID" value="XM_011532520.2"/>
</dbReference>
<dbReference type="RefSeq" id="XP_011530823.1">
    <property type="nucleotide sequence ID" value="XM_011532521.2"/>
</dbReference>
<dbReference type="RefSeq" id="XP_011530824.1">
    <property type="nucleotide sequence ID" value="XM_011532522.2"/>
</dbReference>
<dbReference type="RefSeq" id="XP_011530825.1">
    <property type="nucleotide sequence ID" value="XM_011532523.2"/>
</dbReference>
<dbReference type="RefSeq" id="XP_011530826.1">
    <property type="nucleotide sequence ID" value="XM_011532524.1"/>
</dbReference>
<dbReference type="RefSeq" id="XP_011530827.1">
    <property type="nucleotide sequence ID" value="XM_011532525.2"/>
</dbReference>
<dbReference type="RefSeq" id="XP_011530829.1">
    <property type="nucleotide sequence ID" value="XM_011532527.2"/>
</dbReference>
<dbReference type="RefSeq" id="XP_011530830.1">
    <property type="nucleotide sequence ID" value="XM_011532528.1"/>
</dbReference>
<dbReference type="RefSeq" id="XP_011530831.1">
    <property type="nucleotide sequence ID" value="XM_011532529.2"/>
</dbReference>
<dbReference type="RefSeq" id="XP_011530832.1">
    <property type="nucleotide sequence ID" value="XM_011532530.1"/>
</dbReference>
<dbReference type="RefSeq" id="XP_016858824.1">
    <property type="nucleotide sequence ID" value="XM_017003335.1"/>
</dbReference>
<dbReference type="RefSeq" id="XP_016858825.1">
    <property type="nucleotide sequence ID" value="XM_017003336.1"/>
</dbReference>
<dbReference type="RefSeq" id="XP_016858826.1">
    <property type="nucleotide sequence ID" value="XM_017003337.1"/>
</dbReference>
<dbReference type="RefSeq" id="XP_016858827.1">
    <property type="nucleotide sequence ID" value="XM_017003338.1"/>
</dbReference>
<dbReference type="SMR" id="Q8NHS4"/>
<dbReference type="BioGRID" id="126226">
    <property type="interactions" value="13"/>
</dbReference>
<dbReference type="FunCoup" id="Q8NHS4">
    <property type="interactions" value="226"/>
</dbReference>
<dbReference type="IntAct" id="Q8NHS4">
    <property type="interactions" value="4"/>
</dbReference>
<dbReference type="MINT" id="Q8NHS4"/>
<dbReference type="STRING" id="9606.ENSP00000384869"/>
<dbReference type="GlyGen" id="Q8NHS4">
    <property type="glycosylation" value="1 site, 1 O-linked glycan (1 site)"/>
</dbReference>
<dbReference type="iPTMnet" id="Q8NHS4"/>
<dbReference type="PhosphoSitePlus" id="Q8NHS4"/>
<dbReference type="BioMuta" id="CLHC1"/>
<dbReference type="DMDM" id="317373465"/>
<dbReference type="jPOST" id="Q8NHS4"/>
<dbReference type="MassIVE" id="Q8NHS4"/>
<dbReference type="PaxDb" id="9606-ENSP00000384869"/>
<dbReference type="PeptideAtlas" id="Q8NHS4"/>
<dbReference type="ProteomicsDB" id="73748">
    <molecule id="Q8NHS4-1"/>
</dbReference>
<dbReference type="ProteomicsDB" id="73749">
    <molecule id="Q8NHS4-2"/>
</dbReference>
<dbReference type="Antibodypedia" id="30304">
    <property type="antibodies" value="19 antibodies from 8 providers"/>
</dbReference>
<dbReference type="DNASU" id="130162"/>
<dbReference type="Ensembl" id="ENST00000401408.6">
    <molecule id="Q8NHS4-1"/>
    <property type="protein sequence ID" value="ENSP00000384869.1"/>
    <property type="gene ID" value="ENSG00000162994.16"/>
</dbReference>
<dbReference type="Ensembl" id="ENST00000406076.5">
    <molecule id="Q8NHS4-2"/>
    <property type="protein sequence ID" value="ENSP00000385512.1"/>
    <property type="gene ID" value="ENSG00000162994.16"/>
</dbReference>
<dbReference type="Ensembl" id="ENST00000407122.5">
    <molecule id="Q8NHS4-1"/>
    <property type="protein sequence ID" value="ENSP00000385778.1"/>
    <property type="gene ID" value="ENSG00000162994.16"/>
</dbReference>
<dbReference type="GeneID" id="130162"/>
<dbReference type="KEGG" id="hsa:130162"/>
<dbReference type="MANE-Select" id="ENST00000401408.6">
    <property type="protein sequence ID" value="ENSP00000384869.1"/>
    <property type="RefSeq nucleotide sequence ID" value="NM_152385.4"/>
    <property type="RefSeq protein sequence ID" value="NP_689598.2"/>
</dbReference>
<dbReference type="UCSC" id="uc002ryi.3">
    <molecule id="Q8NHS4-1"/>
    <property type="organism name" value="human"/>
</dbReference>
<dbReference type="AGR" id="HGNC:26453"/>
<dbReference type="CTD" id="130162"/>
<dbReference type="DisGeNET" id="130162"/>
<dbReference type="GeneCards" id="CLHC1"/>
<dbReference type="HGNC" id="HGNC:26453">
    <property type="gene designation" value="CLHC1"/>
</dbReference>
<dbReference type="HPA" id="ENSG00000162994">
    <property type="expression patterns" value="Low tissue specificity"/>
</dbReference>
<dbReference type="MalaCards" id="CLHC1"/>
<dbReference type="neXtProt" id="NX_Q8NHS4"/>
<dbReference type="OpenTargets" id="ENSG00000162994"/>
<dbReference type="PharmGKB" id="PA162379359"/>
<dbReference type="VEuPathDB" id="HostDB:ENSG00000162994"/>
<dbReference type="eggNOG" id="KOG0985">
    <property type="taxonomic scope" value="Eukaryota"/>
</dbReference>
<dbReference type="GeneTree" id="ENSGT00950000183166"/>
<dbReference type="HOGENOM" id="CLU_033164_0_0_1"/>
<dbReference type="InParanoid" id="Q8NHS4"/>
<dbReference type="OMA" id="IGTMNKF"/>
<dbReference type="OrthoDB" id="2113814at2759"/>
<dbReference type="PAN-GO" id="Q8NHS4">
    <property type="GO annotations" value="0 GO annotations based on evolutionary models"/>
</dbReference>
<dbReference type="PhylomeDB" id="Q8NHS4"/>
<dbReference type="TreeFam" id="TF328858"/>
<dbReference type="PathwayCommons" id="Q8NHS4"/>
<dbReference type="SignaLink" id="Q8NHS4"/>
<dbReference type="BioGRID-ORCS" id="130162">
    <property type="hits" value="4 hits in 1139 CRISPR screens"/>
</dbReference>
<dbReference type="ChiTaRS" id="CLHC1">
    <property type="organism name" value="human"/>
</dbReference>
<dbReference type="GenomeRNAi" id="130162"/>
<dbReference type="Pharos" id="Q8NHS4">
    <property type="development level" value="Tdark"/>
</dbReference>
<dbReference type="PRO" id="PR:Q8NHS4"/>
<dbReference type="Proteomes" id="UP000005640">
    <property type="component" value="Chromosome 2"/>
</dbReference>
<dbReference type="RNAct" id="Q8NHS4">
    <property type="molecule type" value="protein"/>
</dbReference>
<dbReference type="Bgee" id="ENSG00000162994">
    <property type="expression patterns" value="Expressed in right uterine tube and 118 other cell types or tissues"/>
</dbReference>
<dbReference type="ExpressionAtlas" id="Q8NHS4">
    <property type="expression patterns" value="baseline and differential"/>
</dbReference>
<dbReference type="Gene3D" id="1.25.40.30">
    <property type="match status" value="1"/>
</dbReference>
<dbReference type="InterPro" id="IPR016024">
    <property type="entry name" value="ARM-type_fold"/>
</dbReference>
<dbReference type="InterPro" id="IPR012331">
    <property type="entry name" value="Clathrin_H-chain_linker"/>
</dbReference>
<dbReference type="InterPro" id="IPR017212">
    <property type="entry name" value="CLHC1"/>
</dbReference>
<dbReference type="InterPro" id="IPR032755">
    <property type="entry name" value="TSNAXIP1_N"/>
</dbReference>
<dbReference type="PANTHER" id="PTHR10292:SF11">
    <property type="entry name" value="CLATHRIN HEAVY CHAIN LINKER DOMAIN-CONTAINING PROTEIN 1"/>
    <property type="match status" value="1"/>
</dbReference>
<dbReference type="PANTHER" id="PTHR10292">
    <property type="entry name" value="CLATHRIN HEAVY CHAIN RELATED"/>
    <property type="match status" value="1"/>
</dbReference>
<dbReference type="Pfam" id="PF13838">
    <property type="entry name" value="Clathrin_H_link"/>
    <property type="match status" value="1"/>
</dbReference>
<dbReference type="Pfam" id="PF15739">
    <property type="entry name" value="TSNAXIP1_N"/>
    <property type="match status" value="1"/>
</dbReference>
<dbReference type="PIRSF" id="PIRSF037469">
    <property type="entry name" value="Clathrin_H-chain-rel"/>
    <property type="match status" value="1"/>
</dbReference>
<dbReference type="SUPFAM" id="SSF48371">
    <property type="entry name" value="ARM repeat"/>
    <property type="match status" value="1"/>
</dbReference>
<organism>
    <name type="scientific">Homo sapiens</name>
    <name type="common">Human</name>
    <dbReference type="NCBI Taxonomy" id="9606"/>
    <lineage>
        <taxon>Eukaryota</taxon>
        <taxon>Metazoa</taxon>
        <taxon>Chordata</taxon>
        <taxon>Craniata</taxon>
        <taxon>Vertebrata</taxon>
        <taxon>Euteleostomi</taxon>
        <taxon>Mammalia</taxon>
        <taxon>Eutheria</taxon>
        <taxon>Euarchontoglires</taxon>
        <taxon>Primates</taxon>
        <taxon>Haplorrhini</taxon>
        <taxon>Catarrhini</taxon>
        <taxon>Hominidae</taxon>
        <taxon>Homo</taxon>
    </lineage>
</organism>
<comment type="interaction">
    <interactant intactId="EBI-10203156">
        <id>Q8NHS4</id>
    </interactant>
    <interactant intactId="EBI-743488">
        <id>Q96L14</id>
        <label>CEP170P1</label>
    </interactant>
    <organismsDiffer>false</organismsDiffer>
    <experiments>3</experiments>
</comment>
<comment type="interaction">
    <interactant intactId="EBI-10203156">
        <id>Q8NHS4</id>
    </interactant>
    <interactant intactId="EBI-739696">
        <id>P25791</id>
        <label>LMO2</label>
    </interactant>
    <organismsDiffer>false</organismsDiffer>
    <experiments>3</experiments>
</comment>
<comment type="interaction">
    <interactant intactId="EBI-10203156">
        <id>Q8NHS4</id>
    </interactant>
    <interactant intactId="EBI-743117">
        <id>Q96ES7</id>
        <label>SGF29</label>
    </interactant>
    <organismsDiffer>false</organismsDiffer>
    <experiments>3</experiments>
</comment>
<comment type="alternative products">
    <event type="alternative splicing"/>
    <isoform>
        <id>Q8NHS4-1</id>
        <name>1</name>
        <sequence type="displayed"/>
    </isoform>
    <isoform>
        <id>Q8NHS4-2</id>
        <name>2</name>
        <sequence type="described" ref="VSP_032461"/>
    </isoform>
</comment>
<protein>
    <recommendedName>
        <fullName>Clathrin heavy chain linker domain-containing protein 1</fullName>
    </recommendedName>
</protein>
<keyword id="KW-0025">Alternative splicing</keyword>
<keyword id="KW-0175">Coiled coil</keyword>
<keyword id="KW-1185">Reference proteome</keyword>